<evidence type="ECO:0000255" key="1">
    <source>
        <dbReference type="HAMAP-Rule" id="MF_03147"/>
    </source>
</evidence>
<reference key="1">
    <citation type="journal article" date="2009" name="Nature">
        <title>Evolution of pathogenicity and sexual reproduction in eight Candida genomes.</title>
        <authorList>
            <person name="Butler G."/>
            <person name="Rasmussen M.D."/>
            <person name="Lin M.F."/>
            <person name="Santos M.A.S."/>
            <person name="Sakthikumar S."/>
            <person name="Munro C.A."/>
            <person name="Rheinbay E."/>
            <person name="Grabherr M."/>
            <person name="Forche A."/>
            <person name="Reedy J.L."/>
            <person name="Agrafioti I."/>
            <person name="Arnaud M.B."/>
            <person name="Bates S."/>
            <person name="Brown A.J.P."/>
            <person name="Brunke S."/>
            <person name="Costanzo M.C."/>
            <person name="Fitzpatrick D.A."/>
            <person name="de Groot P.W.J."/>
            <person name="Harris D."/>
            <person name="Hoyer L.L."/>
            <person name="Hube B."/>
            <person name="Klis F.M."/>
            <person name="Kodira C."/>
            <person name="Lennard N."/>
            <person name="Logue M.E."/>
            <person name="Martin R."/>
            <person name="Neiman A.M."/>
            <person name="Nikolaou E."/>
            <person name="Quail M.A."/>
            <person name="Quinn J."/>
            <person name="Santos M.C."/>
            <person name="Schmitzberger F.F."/>
            <person name="Sherlock G."/>
            <person name="Shah P."/>
            <person name="Silverstein K.A.T."/>
            <person name="Skrzypek M.S."/>
            <person name="Soll D."/>
            <person name="Staggs R."/>
            <person name="Stansfield I."/>
            <person name="Stumpf M.P.H."/>
            <person name="Sudbery P.E."/>
            <person name="Srikantha T."/>
            <person name="Zeng Q."/>
            <person name="Berman J."/>
            <person name="Berriman M."/>
            <person name="Heitman J."/>
            <person name="Gow N.A.R."/>
            <person name="Lorenz M.C."/>
            <person name="Birren B.W."/>
            <person name="Kellis M."/>
            <person name="Cuomo C.A."/>
        </authorList>
    </citation>
    <scope>NUCLEOTIDE SEQUENCE [LARGE SCALE GENOMIC DNA]</scope>
    <source>
        <strain>ATCC 42720</strain>
    </source>
</reference>
<organism>
    <name type="scientific">Clavispora lusitaniae (strain ATCC 42720)</name>
    <name type="common">Yeast</name>
    <name type="synonym">Candida lusitaniae</name>
    <dbReference type="NCBI Taxonomy" id="306902"/>
    <lineage>
        <taxon>Eukaryota</taxon>
        <taxon>Fungi</taxon>
        <taxon>Dikarya</taxon>
        <taxon>Ascomycota</taxon>
        <taxon>Saccharomycotina</taxon>
        <taxon>Pichiomycetes</taxon>
        <taxon>Metschnikowiaceae</taxon>
        <taxon>Clavispora</taxon>
    </lineage>
</organism>
<dbReference type="EC" id="6.3.5.-" evidence="1"/>
<dbReference type="EMBL" id="CH408078">
    <property type="protein sequence ID" value="EEQ38305.1"/>
    <property type="molecule type" value="Genomic_DNA"/>
</dbReference>
<dbReference type="RefSeq" id="XP_002616987.1">
    <property type="nucleotide sequence ID" value="XM_002616941.1"/>
</dbReference>
<dbReference type="SMR" id="C4Y459"/>
<dbReference type="FunCoup" id="C4Y459">
    <property type="interactions" value="370"/>
</dbReference>
<dbReference type="STRING" id="306902.C4Y459"/>
<dbReference type="GeneID" id="8498155"/>
<dbReference type="KEGG" id="clu:CLUG_02431"/>
<dbReference type="VEuPathDB" id="FungiDB:CLUG_02431"/>
<dbReference type="HOGENOM" id="CLU_019240_4_0_1"/>
<dbReference type="InParanoid" id="C4Y459"/>
<dbReference type="OMA" id="ARKWWMG"/>
<dbReference type="OrthoDB" id="117376at4891"/>
<dbReference type="Proteomes" id="UP000007703">
    <property type="component" value="Unassembled WGS sequence"/>
</dbReference>
<dbReference type="GO" id="GO:0030956">
    <property type="term" value="C:glutamyl-tRNA(Gln) amidotransferase complex"/>
    <property type="evidence" value="ECO:0007669"/>
    <property type="project" value="UniProtKB-UniRule"/>
</dbReference>
<dbReference type="GO" id="GO:0005739">
    <property type="term" value="C:mitochondrion"/>
    <property type="evidence" value="ECO:0007669"/>
    <property type="project" value="UniProtKB-SubCell"/>
</dbReference>
<dbReference type="GO" id="GO:0005524">
    <property type="term" value="F:ATP binding"/>
    <property type="evidence" value="ECO:0007669"/>
    <property type="project" value="UniProtKB-KW"/>
</dbReference>
<dbReference type="GO" id="GO:0050567">
    <property type="term" value="F:glutaminyl-tRNA synthase (glutamine-hydrolyzing) activity"/>
    <property type="evidence" value="ECO:0007669"/>
    <property type="project" value="UniProtKB-UniRule"/>
</dbReference>
<dbReference type="GO" id="GO:0070681">
    <property type="term" value="P:glutaminyl-tRNAGln biosynthesis via transamidation"/>
    <property type="evidence" value="ECO:0007669"/>
    <property type="project" value="UniProtKB-UniRule"/>
</dbReference>
<dbReference type="GO" id="GO:0032543">
    <property type="term" value="P:mitochondrial translation"/>
    <property type="evidence" value="ECO:0007669"/>
    <property type="project" value="UniProtKB-UniRule"/>
</dbReference>
<dbReference type="FunFam" id="1.10.10.410:FF:000001">
    <property type="entry name" value="Aspartyl/glutamyl-tRNA(Asn/Gln) amidotransferase subunit B"/>
    <property type="match status" value="1"/>
</dbReference>
<dbReference type="Gene3D" id="1.10.10.410">
    <property type="match status" value="1"/>
</dbReference>
<dbReference type="HAMAP" id="MF_00121">
    <property type="entry name" value="GatB"/>
    <property type="match status" value="1"/>
</dbReference>
<dbReference type="InterPro" id="IPR017959">
    <property type="entry name" value="Asn/Gln-tRNA_amidoTrfase_suB/E"/>
</dbReference>
<dbReference type="InterPro" id="IPR006075">
    <property type="entry name" value="Asn/Gln-tRNA_Trfase_suB/E_cat"/>
</dbReference>
<dbReference type="InterPro" id="IPR018027">
    <property type="entry name" value="Asn/Gln_amidotransferase"/>
</dbReference>
<dbReference type="InterPro" id="IPR003789">
    <property type="entry name" value="Asn/Gln_tRNA_amidoTrase-B-like"/>
</dbReference>
<dbReference type="InterPro" id="IPR004413">
    <property type="entry name" value="GatB"/>
</dbReference>
<dbReference type="InterPro" id="IPR023168">
    <property type="entry name" value="GatB_Yqey_C_2"/>
</dbReference>
<dbReference type="InterPro" id="IPR014746">
    <property type="entry name" value="Gln_synth/guanido_kin_cat_dom"/>
</dbReference>
<dbReference type="NCBIfam" id="TIGR00133">
    <property type="entry name" value="gatB"/>
    <property type="match status" value="1"/>
</dbReference>
<dbReference type="NCBIfam" id="NF004012">
    <property type="entry name" value="PRK05477.1-2"/>
    <property type="match status" value="1"/>
</dbReference>
<dbReference type="PANTHER" id="PTHR11659">
    <property type="entry name" value="GLUTAMYL-TRNA GLN AMIDOTRANSFERASE SUBUNIT B MITOCHONDRIAL AND PROKARYOTIC PET112-RELATED"/>
    <property type="match status" value="1"/>
</dbReference>
<dbReference type="PANTHER" id="PTHR11659:SF0">
    <property type="entry name" value="GLUTAMYL-TRNA(GLN) AMIDOTRANSFERASE SUBUNIT B, MITOCHONDRIAL"/>
    <property type="match status" value="1"/>
</dbReference>
<dbReference type="Pfam" id="PF02934">
    <property type="entry name" value="GatB_N"/>
    <property type="match status" value="1"/>
</dbReference>
<dbReference type="Pfam" id="PF02637">
    <property type="entry name" value="GatB_Yqey"/>
    <property type="match status" value="1"/>
</dbReference>
<dbReference type="SMART" id="SM00845">
    <property type="entry name" value="GatB_Yqey"/>
    <property type="match status" value="1"/>
</dbReference>
<dbReference type="SUPFAM" id="SSF89095">
    <property type="entry name" value="GatB/YqeY motif"/>
    <property type="match status" value="1"/>
</dbReference>
<dbReference type="SUPFAM" id="SSF55931">
    <property type="entry name" value="Glutamine synthetase/guanido kinase"/>
    <property type="match status" value="1"/>
</dbReference>
<name>GATB_CLAL4</name>
<gene>
    <name evidence="1" type="primary">PET112</name>
    <name type="ORF">CLUG_02431</name>
</gene>
<keyword id="KW-0067">ATP-binding</keyword>
<keyword id="KW-0436">Ligase</keyword>
<keyword id="KW-0496">Mitochondrion</keyword>
<keyword id="KW-0547">Nucleotide-binding</keyword>
<keyword id="KW-0648">Protein biosynthesis</keyword>
<keyword id="KW-1185">Reference proteome</keyword>
<accession>C4Y459</accession>
<protein>
    <recommendedName>
        <fullName evidence="1">Glutamyl-tRNA(Gln) amidotransferase subunit B, mitochondrial</fullName>
        <shortName evidence="1">Glu-AdT subunit B</shortName>
        <ecNumber evidence="1">6.3.5.-</ecNumber>
    </recommendedName>
</protein>
<feature type="chain" id="PRO_0000413254" description="Glutamyl-tRNA(Gln) amidotransferase subunit B, mitochondrial">
    <location>
        <begin position="1"/>
        <end position="528"/>
    </location>
</feature>
<comment type="function">
    <text evidence="1">Allows the formation of correctly charged Gln-tRNA(Gln) through the transamidation of misacylated Glu-tRNA(Gln) in the mitochondria. The reaction takes place in the presence of glutamine and ATP through an activated gamma-phospho-Glu-tRNA(Gln).</text>
</comment>
<comment type="catalytic activity">
    <reaction evidence="1">
        <text>L-glutamyl-tRNA(Gln) + L-glutamine + ATP + H2O = L-glutaminyl-tRNA(Gln) + L-glutamate + ADP + phosphate + H(+)</text>
        <dbReference type="Rhea" id="RHEA:17521"/>
        <dbReference type="Rhea" id="RHEA-COMP:9681"/>
        <dbReference type="Rhea" id="RHEA-COMP:9684"/>
        <dbReference type="ChEBI" id="CHEBI:15377"/>
        <dbReference type="ChEBI" id="CHEBI:15378"/>
        <dbReference type="ChEBI" id="CHEBI:29985"/>
        <dbReference type="ChEBI" id="CHEBI:30616"/>
        <dbReference type="ChEBI" id="CHEBI:43474"/>
        <dbReference type="ChEBI" id="CHEBI:58359"/>
        <dbReference type="ChEBI" id="CHEBI:78520"/>
        <dbReference type="ChEBI" id="CHEBI:78521"/>
        <dbReference type="ChEBI" id="CHEBI:456216"/>
    </reaction>
</comment>
<comment type="subunit">
    <text evidence="1">Subunit of the heterotrimeric GatFAB amidotransferase (AdT) complex, composed of A, B and F subunits.</text>
</comment>
<comment type="subcellular location">
    <subcellularLocation>
        <location evidence="1">Mitochondrion</location>
    </subcellularLocation>
</comment>
<comment type="miscellaneous">
    <text evidence="1">This protein may be expected to contain an N-terminal transit peptide but none has been predicted.</text>
</comment>
<comment type="similarity">
    <text evidence="1">Belongs to the GatB/GatE family. GatB subfamily.</text>
</comment>
<proteinExistence type="inferred from homology"/>
<sequence>MEEKSQVQLDSHIFNTTSSSSQYYPLNVMISRSIKGWRPEPGYPFKCGIEIHTQLKTKHKLFSLSKNSPGAAPNTCASYFDFGLPGTIPKLNPEALLLALRAAVALKSDISSISSFDRKHYFYMDQPLGYQITQHYQPLAKNGHLSLVPRLDDVEEAKTIHVEQIQLEQDTAKLNYNAYDGTVDIDHNRANVPLIEMVTKPDFSHLSELRAFVKKYISLMTHLGVCSGDMENGALRCDVNVSVAGGNRVEIKNLGSTSEIIAAAKYEYARQVQLLKHGKTPVEQETRSWDGTKTIRTRSKEDAIDYRYFPDVELPRIRLHPSIGKDLSQTLPELPEQLIQQLCEEPFLLEVKHARFLVENPDLYNYYKNLHHIIVDKHKLSYKVVNNWIIHEFIGAFNKLDIPVDVSVIDTEKLASLIIMVSEKKISITSAKLLLTQILQSPEDRELSIPDLIDAYDLGAVNDIHGDDLKEAIKEVCSEVIDSHPDVVTKIRNGKTKSINFLIGRAMKETQGKVDSKEFEKMFKKLIG</sequence>